<feature type="chain" id="PRO_1000089149" description="Endoribonuclease YbeY">
    <location>
        <begin position="1"/>
        <end position="139"/>
    </location>
</feature>
<feature type="binding site" evidence="1">
    <location>
        <position position="107"/>
    </location>
    <ligand>
        <name>Zn(2+)</name>
        <dbReference type="ChEBI" id="CHEBI:29105"/>
        <note>catalytic</note>
    </ligand>
</feature>
<feature type="binding site" evidence="1">
    <location>
        <position position="111"/>
    </location>
    <ligand>
        <name>Zn(2+)</name>
        <dbReference type="ChEBI" id="CHEBI:29105"/>
        <note>catalytic</note>
    </ligand>
</feature>
<feature type="binding site" evidence="1">
    <location>
        <position position="117"/>
    </location>
    <ligand>
        <name>Zn(2+)</name>
        <dbReference type="ChEBI" id="CHEBI:29105"/>
        <note>catalytic</note>
    </ligand>
</feature>
<comment type="function">
    <text evidence="1">Single strand-specific metallo-endoribonuclease involved in late-stage 70S ribosome quality control and in maturation of the 3' terminus of the 16S rRNA.</text>
</comment>
<comment type="cofactor">
    <cofactor evidence="1">
        <name>Zn(2+)</name>
        <dbReference type="ChEBI" id="CHEBI:29105"/>
    </cofactor>
    <text evidence="1">Binds 1 zinc ion.</text>
</comment>
<comment type="subcellular location">
    <subcellularLocation>
        <location evidence="1">Cytoplasm</location>
    </subcellularLocation>
</comment>
<comment type="similarity">
    <text evidence="1">Belongs to the endoribonuclease YbeY family.</text>
</comment>
<reference key="1">
    <citation type="journal article" date="2008" name="Science">
        <title>Genome of an endosymbiont coupling N2 fixation to cellulolysis within RT protist cells in termite gut.</title>
        <authorList>
            <person name="Hongoh Y."/>
            <person name="Sharma V.K."/>
            <person name="Prakash T."/>
            <person name="Noda S."/>
            <person name="Toh H."/>
            <person name="Taylor T.D."/>
            <person name="Kudo T."/>
            <person name="Sakaki Y."/>
            <person name="Toyoda A."/>
            <person name="Hattori M."/>
            <person name="Ohkuma M."/>
        </authorList>
    </citation>
    <scope>NUCLEOTIDE SEQUENCE [LARGE SCALE GENOMIC DNA]</scope>
</reference>
<dbReference type="EC" id="3.1.-.-" evidence="1"/>
<dbReference type="EMBL" id="AP010656">
    <property type="protein sequence ID" value="BAG83530.1"/>
    <property type="molecule type" value="Genomic_DNA"/>
</dbReference>
<dbReference type="RefSeq" id="WP_012573291.1">
    <property type="nucleotide sequence ID" value="NC_011565.1"/>
</dbReference>
<dbReference type="SMR" id="B6YQQ8"/>
<dbReference type="STRING" id="511995.CFPG_267"/>
<dbReference type="KEGG" id="aps:CFPG_267"/>
<dbReference type="eggNOG" id="COG0319">
    <property type="taxonomic scope" value="Bacteria"/>
</dbReference>
<dbReference type="HOGENOM" id="CLU_106710_3_3_10"/>
<dbReference type="OrthoDB" id="9811984at2"/>
<dbReference type="Proteomes" id="UP000000723">
    <property type="component" value="Chromosome"/>
</dbReference>
<dbReference type="GO" id="GO:0005737">
    <property type="term" value="C:cytoplasm"/>
    <property type="evidence" value="ECO:0007669"/>
    <property type="project" value="UniProtKB-SubCell"/>
</dbReference>
<dbReference type="GO" id="GO:0004222">
    <property type="term" value="F:metalloendopeptidase activity"/>
    <property type="evidence" value="ECO:0007669"/>
    <property type="project" value="InterPro"/>
</dbReference>
<dbReference type="GO" id="GO:0004521">
    <property type="term" value="F:RNA endonuclease activity"/>
    <property type="evidence" value="ECO:0007669"/>
    <property type="project" value="UniProtKB-UniRule"/>
</dbReference>
<dbReference type="GO" id="GO:0008270">
    <property type="term" value="F:zinc ion binding"/>
    <property type="evidence" value="ECO:0007669"/>
    <property type="project" value="UniProtKB-UniRule"/>
</dbReference>
<dbReference type="GO" id="GO:0006364">
    <property type="term" value="P:rRNA processing"/>
    <property type="evidence" value="ECO:0007669"/>
    <property type="project" value="UniProtKB-UniRule"/>
</dbReference>
<dbReference type="Gene3D" id="3.40.390.30">
    <property type="entry name" value="Metalloproteases ('zincins'), catalytic domain"/>
    <property type="match status" value="1"/>
</dbReference>
<dbReference type="HAMAP" id="MF_00009">
    <property type="entry name" value="Endoribonucl_YbeY"/>
    <property type="match status" value="1"/>
</dbReference>
<dbReference type="InterPro" id="IPR023091">
    <property type="entry name" value="MetalPrtase_cat_dom_sf_prd"/>
</dbReference>
<dbReference type="InterPro" id="IPR002036">
    <property type="entry name" value="YbeY"/>
</dbReference>
<dbReference type="NCBIfam" id="TIGR00043">
    <property type="entry name" value="rRNA maturation RNase YbeY"/>
    <property type="match status" value="1"/>
</dbReference>
<dbReference type="Pfam" id="PF02130">
    <property type="entry name" value="YbeY"/>
    <property type="match status" value="1"/>
</dbReference>
<dbReference type="SUPFAM" id="SSF55486">
    <property type="entry name" value="Metalloproteases ('zincins'), catalytic domain"/>
    <property type="match status" value="1"/>
</dbReference>
<name>YBEY_AZOPC</name>
<sequence length="139" mass="16422">MAVLYTTLDSKFPSINRKITTRWIKQILIDYNKRAGDITCIFCSNDEILRINNFYLNHDCYTDIITFDYSKGDIISGDLFIALDMIKYNSMKYNVNYFEELYRVIIHGILHLCGFNDKLIKDIKVMREGENRALEKIRS</sequence>
<evidence type="ECO:0000255" key="1">
    <source>
        <dbReference type="HAMAP-Rule" id="MF_00009"/>
    </source>
</evidence>
<accession>B6YQQ8</accession>
<proteinExistence type="inferred from homology"/>
<organism>
    <name type="scientific">Azobacteroides pseudotrichonymphae genomovar. CFP2</name>
    <dbReference type="NCBI Taxonomy" id="511995"/>
    <lineage>
        <taxon>Bacteria</taxon>
        <taxon>Pseudomonadati</taxon>
        <taxon>Bacteroidota</taxon>
        <taxon>Bacteroidia</taxon>
        <taxon>Bacteroidales</taxon>
        <taxon>Candidatus Azobacteroides</taxon>
    </lineage>
</organism>
<gene>
    <name evidence="1" type="primary">ybeY</name>
    <name type="ordered locus">CFPG_267</name>
</gene>
<protein>
    <recommendedName>
        <fullName evidence="1">Endoribonuclease YbeY</fullName>
        <ecNumber evidence="1">3.1.-.-</ecNumber>
    </recommendedName>
</protein>
<keyword id="KW-0963">Cytoplasm</keyword>
<keyword id="KW-0255">Endonuclease</keyword>
<keyword id="KW-0378">Hydrolase</keyword>
<keyword id="KW-0479">Metal-binding</keyword>
<keyword id="KW-0540">Nuclease</keyword>
<keyword id="KW-1185">Reference proteome</keyword>
<keyword id="KW-0690">Ribosome biogenesis</keyword>
<keyword id="KW-0698">rRNA processing</keyword>
<keyword id="KW-0862">Zinc</keyword>